<comment type="function">
    <text evidence="1">Has bacteriostatic activity against M.luteus. No activity toward E.coli and F.oxysporum.</text>
</comment>
<comment type="subcellular location">
    <subcellularLocation>
        <location evidence="1">Secreted</location>
    </subcellularLocation>
</comment>
<comment type="tissue specificity">
    <text>Coelomic liquid (at protein level). Expressed in large fat cells in contact with coelomic cavities, in intestinal epithelia and at the epidermis level.</text>
</comment>
<comment type="induction">
    <text evidence="1">After blood meal ingestion and upon bacterial challenge.</text>
</comment>
<comment type="mass spectrometry" mass="9973.1" method="MALDI" evidence="1"/>
<reference key="1">
    <citation type="journal article" date="2004" name="J. Biol. Chem.">
        <title>Molecular characterization of two novel antibacterial peptides inducible upon bacterial challenge in an annelid, the leech Theromyzon tessulatum.</title>
        <authorList>
            <person name="Tasiemski A."/>
            <person name="Vandenbulcke F."/>
            <person name="Mitta G."/>
            <person name="Lemoine J."/>
            <person name="Lefebvre C."/>
            <person name="Sautiere P.-E."/>
            <person name="Salzet M."/>
        </authorList>
    </citation>
    <scope>NUCLEOTIDE SEQUENCE [MRNA]</scope>
    <scope>PROTEIN SEQUENCE OF 22-51</scope>
    <scope>SUBCELLULAR LOCATION</scope>
    <scope>FUNCTION</scope>
    <scope>INDUCTION</scope>
    <scope>MASS SPECTROMETRY</scope>
</reference>
<evidence type="ECO:0000269" key="1">
    <source>
    </source>
</evidence>
<feature type="signal peptide" evidence="1">
    <location>
        <begin position="1"/>
        <end position="21"/>
    </location>
</feature>
<feature type="chain" id="PRO_0000342177" description="Theromyzin">
    <location>
        <begin position="22"/>
        <end position="107"/>
    </location>
</feature>
<keyword id="KW-0929">Antimicrobial</keyword>
<keyword id="KW-0903">Direct protein sequencing</keyword>
<keyword id="KW-0964">Secreted</keyword>
<keyword id="KW-0732">Signal</keyword>
<name>THMYZ_THETS</name>
<protein>
    <recommendedName>
        <fullName>Theromyzin</fullName>
    </recommendedName>
</protein>
<sequence length="107" mass="12221">MHAKIILALFLGMTAFLAVQADHHHDHGHDDHEHEELTLEKIKEKIKDYADKTPVDQLTERVQAGRDYLLGKGARPSHLPARVDRHLSKLTAAEKQELADYLLTFLH</sequence>
<proteinExistence type="evidence at protein level"/>
<organism>
    <name type="scientific">Theromyzon tessulatum</name>
    <name type="common">Duck leech</name>
    <dbReference type="NCBI Taxonomy" id="13286"/>
    <lineage>
        <taxon>Eukaryota</taxon>
        <taxon>Metazoa</taxon>
        <taxon>Spiralia</taxon>
        <taxon>Lophotrochozoa</taxon>
        <taxon>Annelida</taxon>
        <taxon>Clitellata</taxon>
        <taxon>Hirudinea</taxon>
        <taxon>Rhynchobdellida</taxon>
        <taxon>Glossiphoniidae</taxon>
        <taxon>Theromyzon</taxon>
    </lineage>
</organism>
<accession>Q6T6C1</accession>
<dbReference type="EMBL" id="AY434033">
    <property type="protein sequence ID" value="AAR12066.1"/>
    <property type="molecule type" value="mRNA"/>
</dbReference>
<dbReference type="SMR" id="Q6T6C1"/>
<dbReference type="GO" id="GO:0005576">
    <property type="term" value="C:extracellular region"/>
    <property type="evidence" value="ECO:0007669"/>
    <property type="project" value="UniProtKB-SubCell"/>
</dbReference>